<proteinExistence type="inferred from homology"/>
<organism>
    <name type="scientific">Nostoc punctiforme (strain ATCC 29133 / PCC 73102)</name>
    <dbReference type="NCBI Taxonomy" id="63737"/>
    <lineage>
        <taxon>Bacteria</taxon>
        <taxon>Bacillati</taxon>
        <taxon>Cyanobacteriota</taxon>
        <taxon>Cyanophyceae</taxon>
        <taxon>Nostocales</taxon>
        <taxon>Nostocaceae</taxon>
        <taxon>Nostoc</taxon>
    </lineage>
</organism>
<dbReference type="EMBL" id="CP001037">
    <property type="protein sequence ID" value="ACC82265.1"/>
    <property type="molecule type" value="Genomic_DNA"/>
</dbReference>
<dbReference type="RefSeq" id="WP_012410236.1">
    <property type="nucleotide sequence ID" value="NC_010628.1"/>
</dbReference>
<dbReference type="SMR" id="B2J5A8"/>
<dbReference type="STRING" id="63737.Npun_F3881"/>
<dbReference type="EnsemblBacteria" id="ACC82265">
    <property type="protein sequence ID" value="ACC82265"/>
    <property type="gene ID" value="Npun_F3881"/>
</dbReference>
<dbReference type="KEGG" id="npu:Npun_F3881"/>
<dbReference type="eggNOG" id="COG0048">
    <property type="taxonomic scope" value="Bacteria"/>
</dbReference>
<dbReference type="HOGENOM" id="CLU_104295_1_2_3"/>
<dbReference type="OrthoDB" id="9802366at2"/>
<dbReference type="PhylomeDB" id="B2J5A8"/>
<dbReference type="Proteomes" id="UP000001191">
    <property type="component" value="Chromosome"/>
</dbReference>
<dbReference type="GO" id="GO:0015935">
    <property type="term" value="C:small ribosomal subunit"/>
    <property type="evidence" value="ECO:0007669"/>
    <property type="project" value="InterPro"/>
</dbReference>
<dbReference type="GO" id="GO:0019843">
    <property type="term" value="F:rRNA binding"/>
    <property type="evidence" value="ECO:0007669"/>
    <property type="project" value="UniProtKB-UniRule"/>
</dbReference>
<dbReference type="GO" id="GO:0003735">
    <property type="term" value="F:structural constituent of ribosome"/>
    <property type="evidence" value="ECO:0007669"/>
    <property type="project" value="InterPro"/>
</dbReference>
<dbReference type="GO" id="GO:0000049">
    <property type="term" value="F:tRNA binding"/>
    <property type="evidence" value="ECO:0007669"/>
    <property type="project" value="UniProtKB-UniRule"/>
</dbReference>
<dbReference type="GO" id="GO:0006412">
    <property type="term" value="P:translation"/>
    <property type="evidence" value="ECO:0007669"/>
    <property type="project" value="UniProtKB-UniRule"/>
</dbReference>
<dbReference type="CDD" id="cd03368">
    <property type="entry name" value="Ribosomal_S12"/>
    <property type="match status" value="1"/>
</dbReference>
<dbReference type="FunFam" id="2.40.50.140:FF:000001">
    <property type="entry name" value="30S ribosomal protein S12"/>
    <property type="match status" value="1"/>
</dbReference>
<dbReference type="Gene3D" id="2.40.50.140">
    <property type="entry name" value="Nucleic acid-binding proteins"/>
    <property type="match status" value="1"/>
</dbReference>
<dbReference type="HAMAP" id="MF_00403_B">
    <property type="entry name" value="Ribosomal_uS12_B"/>
    <property type="match status" value="1"/>
</dbReference>
<dbReference type="InterPro" id="IPR012340">
    <property type="entry name" value="NA-bd_OB-fold"/>
</dbReference>
<dbReference type="InterPro" id="IPR006032">
    <property type="entry name" value="Ribosomal_uS12"/>
</dbReference>
<dbReference type="InterPro" id="IPR005679">
    <property type="entry name" value="Ribosomal_uS12_bac"/>
</dbReference>
<dbReference type="NCBIfam" id="TIGR00981">
    <property type="entry name" value="rpsL_bact"/>
    <property type="match status" value="1"/>
</dbReference>
<dbReference type="PANTHER" id="PTHR11652">
    <property type="entry name" value="30S RIBOSOMAL PROTEIN S12 FAMILY MEMBER"/>
    <property type="match status" value="1"/>
</dbReference>
<dbReference type="Pfam" id="PF00164">
    <property type="entry name" value="Ribosom_S12_S23"/>
    <property type="match status" value="1"/>
</dbReference>
<dbReference type="PIRSF" id="PIRSF002133">
    <property type="entry name" value="Ribosomal_S12/S23"/>
    <property type="match status" value="1"/>
</dbReference>
<dbReference type="PRINTS" id="PR01034">
    <property type="entry name" value="RIBOSOMALS12"/>
</dbReference>
<dbReference type="SUPFAM" id="SSF50249">
    <property type="entry name" value="Nucleic acid-binding proteins"/>
    <property type="match status" value="1"/>
</dbReference>
<dbReference type="PROSITE" id="PS00055">
    <property type="entry name" value="RIBOSOMAL_S12"/>
    <property type="match status" value="1"/>
</dbReference>
<gene>
    <name evidence="2" type="primary">rpsL</name>
    <name evidence="2" type="synonym">rps12</name>
    <name type="ordered locus">Npun_F3881</name>
</gene>
<reference key="1">
    <citation type="journal article" date="2013" name="Plant Physiol.">
        <title>A Nostoc punctiforme Sugar Transporter Necessary to Establish a Cyanobacterium-Plant Symbiosis.</title>
        <authorList>
            <person name="Ekman M."/>
            <person name="Picossi S."/>
            <person name="Campbell E.L."/>
            <person name="Meeks J.C."/>
            <person name="Flores E."/>
        </authorList>
    </citation>
    <scope>NUCLEOTIDE SEQUENCE [LARGE SCALE GENOMIC DNA]</scope>
    <source>
        <strain>ATCC 29133 / PCC 73102</strain>
    </source>
</reference>
<protein>
    <recommendedName>
        <fullName evidence="2">Small ribosomal subunit protein uS12</fullName>
    </recommendedName>
    <alternativeName>
        <fullName evidence="4">30S ribosomal protein S12</fullName>
    </alternativeName>
</protein>
<name>RS12_NOSP7</name>
<feature type="chain" id="PRO_1000194199" description="Small ribosomal subunit protein uS12">
    <location>
        <begin position="1"/>
        <end position="127"/>
    </location>
</feature>
<feature type="region of interest" description="Disordered" evidence="3">
    <location>
        <begin position="102"/>
        <end position="127"/>
    </location>
</feature>
<feature type="compositionally biased region" description="Basic residues" evidence="3">
    <location>
        <begin position="113"/>
        <end position="127"/>
    </location>
</feature>
<feature type="modified residue" description="3-methylthioaspartic acid" evidence="1">
    <location>
        <position position="89"/>
    </location>
</feature>
<evidence type="ECO:0000250" key="1"/>
<evidence type="ECO:0000255" key="2">
    <source>
        <dbReference type="HAMAP-Rule" id="MF_00403"/>
    </source>
</evidence>
<evidence type="ECO:0000256" key="3">
    <source>
        <dbReference type="SAM" id="MobiDB-lite"/>
    </source>
</evidence>
<evidence type="ECO:0000305" key="4"/>
<sequence>MPTIQQLIRNEREQARQKTKSPALKQCPQRRGVCTRVYTTTPKKPNSALRKVARVRLTSGFEVTAYIPGIGHNLQEHSVVMIRGGRVKDLPGVRYHIIRGTLDTAGVKDRKQGRSKYGTKRPKEAKK</sequence>
<keyword id="KW-0488">Methylation</keyword>
<keyword id="KW-1185">Reference proteome</keyword>
<keyword id="KW-0687">Ribonucleoprotein</keyword>
<keyword id="KW-0689">Ribosomal protein</keyword>
<keyword id="KW-0694">RNA-binding</keyword>
<keyword id="KW-0699">rRNA-binding</keyword>
<keyword id="KW-0820">tRNA-binding</keyword>
<comment type="function">
    <text evidence="2">With S4 and S5 plays an important role in translational accuracy.</text>
</comment>
<comment type="function">
    <text evidence="2">Interacts with and stabilizes bases of the 16S rRNA that are involved in tRNA selection in the A site and with the mRNA backbone. Located at the interface of the 30S and 50S subunits, it traverses the body of the 30S subunit contacting proteins on the other side and probably holding the rRNA structure together. The combined cluster of proteins S8, S12 and S17 appears to hold together the shoulder and platform of the 30S subunit.</text>
</comment>
<comment type="subunit">
    <text evidence="2">Part of the 30S ribosomal subunit. Contacts proteins S8 and S17. May interact with IF1 in the 30S initiation complex.</text>
</comment>
<comment type="similarity">
    <text evidence="2">Belongs to the universal ribosomal protein uS12 family.</text>
</comment>
<accession>B2J5A8</accession>